<sequence length="406" mass="45905">MSGEQEPDDSYARVRAVVMTRDDSSGGWLQLGGGGLSSVTVSKTLQPGDSGGTEFLVHGERLRDKTVVLECVLRRDLVYNKVTPTFHHWRIGDKKFGLTFQSPADARAFDRGIRRAIEDLSQGLPASCHGESETSEDGPQVNKEDHYSTHNNDHFFRSDSIPTEELYRTSVIRPSPFENLNPRRAYIHNQVPLKPIRHVSFQDEDEIVRINPRDMIIRRYADYRHPDIFRNDVDREEPEDVTFFTKTDSKKPSYLYSPANGRDSLKEQKPVEVCKIQPTSSLKKSKGKKEDGEHSSCVYCQERFNHEENGRGKCQDAPDPIQRCIYQVSCMLCAESMLYHCMSDSEGDYSDPCSCDASDENLCLRWLALITLSFIAPCMCCYLPLRACHHCGEMCGCCGGKHKAAG</sequence>
<comment type="function">
    <text evidence="2">Tyrosine kinase substrate that inhibits growth-factor-mediated activation of MAP kinase.</text>
</comment>
<comment type="subcellular location">
    <subcellularLocation>
        <location evidence="2">Cell membrane</location>
        <topology evidence="2">Peripheral membrane protein</topology>
    </subcellularLocation>
</comment>
<comment type="PTM">
    <text evidence="2">Palmitoylated by ZDHHC17/HIP14.</text>
</comment>
<comment type="PTM">
    <text evidence="1">Ubiquitinated.</text>
</comment>
<comment type="PTM">
    <text evidence="2">Phosphorylated on tyrosine.</text>
</comment>
<keyword id="KW-0002">3D-structure</keyword>
<keyword id="KW-1003">Cell membrane</keyword>
<keyword id="KW-0449">Lipoprotein</keyword>
<keyword id="KW-0472">Membrane</keyword>
<keyword id="KW-0564">Palmitate</keyword>
<keyword id="KW-0597">Phosphoprotein</keyword>
<keyword id="KW-1185">Reference proteome</keyword>
<keyword id="KW-0832">Ubl conjugation</keyword>
<feature type="chain" id="PRO_0000076909" description="Sprouty-related, EVH1 domain-containing protein 1">
    <location>
        <begin position="1"/>
        <end position="406"/>
    </location>
</feature>
<feature type="domain" description="WH1" evidence="3">
    <location>
        <begin position="3"/>
        <end position="120"/>
    </location>
</feature>
<feature type="domain" description="KBD" evidence="5">
    <location>
        <begin position="195"/>
        <end position="247"/>
    </location>
</feature>
<feature type="domain" description="SPR" evidence="4">
    <location>
        <begin position="296"/>
        <end position="404"/>
    </location>
</feature>
<feature type="region of interest" description="Disordered" evidence="6">
    <location>
        <begin position="124"/>
        <end position="154"/>
    </location>
</feature>
<feature type="compositionally biased region" description="Basic and acidic residues" evidence="6">
    <location>
        <begin position="142"/>
        <end position="154"/>
    </location>
</feature>
<feature type="strand" evidence="7">
    <location>
        <begin position="12"/>
        <end position="21"/>
    </location>
</feature>
<feature type="strand" evidence="7">
    <location>
        <begin position="23"/>
        <end position="26"/>
    </location>
</feature>
<feature type="strand" evidence="7">
    <location>
        <begin position="28"/>
        <end position="30"/>
    </location>
</feature>
<feature type="helix" evidence="7">
    <location>
        <begin position="31"/>
        <end position="33"/>
    </location>
</feature>
<feature type="strand" evidence="7">
    <location>
        <begin position="37"/>
        <end position="42"/>
    </location>
</feature>
<feature type="strand" evidence="7">
    <location>
        <begin position="56"/>
        <end position="61"/>
    </location>
</feature>
<feature type="turn" evidence="7">
    <location>
        <begin position="62"/>
        <end position="64"/>
    </location>
</feature>
<feature type="strand" evidence="7">
    <location>
        <begin position="67"/>
        <end position="72"/>
    </location>
</feature>
<feature type="strand" evidence="7">
    <location>
        <begin position="78"/>
        <end position="83"/>
    </location>
</feature>
<feature type="strand" evidence="7">
    <location>
        <begin position="86"/>
        <end position="91"/>
    </location>
</feature>
<feature type="strand" evidence="7">
    <location>
        <begin position="94"/>
        <end position="102"/>
    </location>
</feature>
<feature type="helix" evidence="7">
    <location>
        <begin position="103"/>
        <end position="120"/>
    </location>
</feature>
<evidence type="ECO:0000250" key="1">
    <source>
        <dbReference type="UniProtKB" id="Q7Z699"/>
    </source>
</evidence>
<evidence type="ECO:0000250" key="2">
    <source>
        <dbReference type="UniProtKB" id="Q924S8"/>
    </source>
</evidence>
<evidence type="ECO:0000255" key="3">
    <source>
        <dbReference type="PROSITE-ProRule" id="PRU00410"/>
    </source>
</evidence>
<evidence type="ECO:0000255" key="4">
    <source>
        <dbReference type="PROSITE-ProRule" id="PRU00572"/>
    </source>
</evidence>
<evidence type="ECO:0000255" key="5">
    <source>
        <dbReference type="PROSITE-ProRule" id="PRU00821"/>
    </source>
</evidence>
<evidence type="ECO:0000256" key="6">
    <source>
        <dbReference type="SAM" id="MobiDB-lite"/>
    </source>
</evidence>
<evidence type="ECO:0007829" key="7">
    <source>
        <dbReference type="PDB" id="1XOD"/>
    </source>
</evidence>
<accession>Q66JG9</accession>
<gene>
    <name type="primary">spred1</name>
</gene>
<reference key="1">
    <citation type="submission" date="2004-08" db="EMBL/GenBank/DDBJ databases">
        <title>Sprouty and Spred proteins diverge functionally to coordinate FGF signal interpretation during mesoderm formation.</title>
        <authorList>
            <person name="Sivak J.M."/>
            <person name="Petersen L.F."/>
            <person name="Amaya E."/>
        </authorList>
    </citation>
    <scope>NUCLEOTIDE SEQUENCE [MRNA]</scope>
</reference>
<reference key="2">
    <citation type="submission" date="2004-08" db="EMBL/GenBank/DDBJ databases">
        <authorList>
            <consortium name="NIH - Xenopus Gene Collection (XGC) project"/>
        </authorList>
    </citation>
    <scope>NUCLEOTIDE SEQUENCE [LARGE SCALE MRNA]</scope>
    <source>
        <tissue>Embryo</tissue>
    </source>
</reference>
<reference key="3">
    <citation type="journal article" date="2005" name="FEBS Lett.">
        <title>1.15 A crystal structure of the X. tropicalis Spred1 EVH1 domain suggests a fourth distinct peptide-binding mechanism within the EVH1 family.</title>
        <authorList>
            <person name="Harmer N.J."/>
            <person name="Sivak J.M."/>
            <person name="Amaya E."/>
            <person name="Blundell T.L."/>
        </authorList>
    </citation>
    <scope>X-RAY CRYSTALLOGRAPHY (1.15 ANGSTROMS) OF 8-123</scope>
</reference>
<organism>
    <name type="scientific">Xenopus tropicalis</name>
    <name type="common">Western clawed frog</name>
    <name type="synonym">Silurana tropicalis</name>
    <dbReference type="NCBI Taxonomy" id="8364"/>
    <lineage>
        <taxon>Eukaryota</taxon>
        <taxon>Metazoa</taxon>
        <taxon>Chordata</taxon>
        <taxon>Craniata</taxon>
        <taxon>Vertebrata</taxon>
        <taxon>Euteleostomi</taxon>
        <taxon>Amphibia</taxon>
        <taxon>Batrachia</taxon>
        <taxon>Anura</taxon>
        <taxon>Pipoidea</taxon>
        <taxon>Pipidae</taxon>
        <taxon>Xenopodinae</taxon>
        <taxon>Xenopus</taxon>
        <taxon>Silurana</taxon>
    </lineage>
</organism>
<protein>
    <recommendedName>
        <fullName>Sprouty-related, EVH1 domain-containing protein 1</fullName>
        <shortName>Spred-1</shortName>
    </recommendedName>
</protein>
<name>SPRE1_XENTR</name>
<dbReference type="EMBL" id="AY714338">
    <property type="protein sequence ID" value="AAU43767.1"/>
    <property type="molecule type" value="mRNA"/>
</dbReference>
<dbReference type="EMBL" id="BC080919">
    <property type="protein sequence ID" value="AAH80919.1"/>
    <property type="molecule type" value="mRNA"/>
</dbReference>
<dbReference type="RefSeq" id="NP_001008037.1">
    <property type="nucleotide sequence ID" value="NM_001008036.1"/>
</dbReference>
<dbReference type="PDB" id="1TJ6">
    <property type="method" value="X-ray"/>
    <property type="resolution" value="1.65 A"/>
    <property type="chains" value="A/B=8-123"/>
</dbReference>
<dbReference type="PDB" id="1XOD">
    <property type="method" value="X-ray"/>
    <property type="resolution" value="1.15 A"/>
    <property type="chains" value="A/B=8-123"/>
</dbReference>
<dbReference type="PDBsum" id="1TJ6"/>
<dbReference type="PDBsum" id="1XOD"/>
<dbReference type="SMR" id="Q66JG9"/>
<dbReference type="FunCoup" id="Q66JG9">
    <property type="interactions" value="2795"/>
</dbReference>
<dbReference type="STRING" id="8364.ENSXETP00000052494"/>
<dbReference type="DNASU" id="493399"/>
<dbReference type="GeneID" id="493399"/>
<dbReference type="KEGG" id="xtr:493399"/>
<dbReference type="AGR" id="Xenbase:XB-GENE-482851"/>
<dbReference type="CTD" id="161742"/>
<dbReference type="Xenbase" id="XB-GENE-482851">
    <property type="gene designation" value="spred1"/>
</dbReference>
<dbReference type="InParanoid" id="Q66JG9"/>
<dbReference type="OMA" id="KKPDYLY"/>
<dbReference type="OrthoDB" id="5786858at2759"/>
<dbReference type="Reactome" id="R-XTR-5658623">
    <property type="pathway name" value="FGFRL1 modulation of FGFR1 signaling"/>
</dbReference>
<dbReference type="EvolutionaryTrace" id="Q66JG9"/>
<dbReference type="Proteomes" id="UP000008143">
    <property type="component" value="Chromosome 8"/>
</dbReference>
<dbReference type="Bgee" id="ENSXETG00000018057">
    <property type="expression patterns" value="Expressed in brain and 10 other cell types or tissues"/>
</dbReference>
<dbReference type="ExpressionAtlas" id="Q66JG9">
    <property type="expression patterns" value="baseline"/>
</dbReference>
<dbReference type="GO" id="GO:0005886">
    <property type="term" value="C:plasma membrane"/>
    <property type="evidence" value="ECO:0007669"/>
    <property type="project" value="UniProtKB-SubCell"/>
</dbReference>
<dbReference type="GO" id="GO:0019902">
    <property type="term" value="F:phosphatase binding"/>
    <property type="evidence" value="ECO:0000250"/>
    <property type="project" value="UniProtKB"/>
</dbReference>
<dbReference type="GO" id="GO:0009966">
    <property type="term" value="P:regulation of signal transduction"/>
    <property type="evidence" value="ECO:0007669"/>
    <property type="project" value="InterPro"/>
</dbReference>
<dbReference type="CDD" id="cd10574">
    <property type="entry name" value="EVH1_SPRED-like"/>
    <property type="match status" value="1"/>
</dbReference>
<dbReference type="FunFam" id="2.30.29.30:FF:000052">
    <property type="entry name" value="Sprouty-related, EVH1 domain containing 2"/>
    <property type="match status" value="1"/>
</dbReference>
<dbReference type="Gene3D" id="2.30.29.30">
    <property type="entry name" value="Pleckstrin-homology domain (PH domain)/Phosphotyrosine-binding domain (PTB)"/>
    <property type="match status" value="1"/>
</dbReference>
<dbReference type="InterPro" id="IPR023337">
    <property type="entry name" value="KBD"/>
</dbReference>
<dbReference type="InterPro" id="IPR011993">
    <property type="entry name" value="PH-like_dom_sf"/>
</dbReference>
<dbReference type="InterPro" id="IPR041937">
    <property type="entry name" value="SPRE_EVH1"/>
</dbReference>
<dbReference type="InterPro" id="IPR007875">
    <property type="entry name" value="Sprouty"/>
</dbReference>
<dbReference type="InterPro" id="IPR000697">
    <property type="entry name" value="WH1/EVH1_dom"/>
</dbReference>
<dbReference type="PANTHER" id="PTHR11202:SF18">
    <property type="entry name" value="SPROUTY-RELATED, EVH1 DOMAIN-CONTAINING PROTEIN 1"/>
    <property type="match status" value="1"/>
</dbReference>
<dbReference type="PANTHER" id="PTHR11202">
    <property type="entry name" value="SPROUTY-RELATED, EVH1 DOMAIN-CONTAINING PROTEIN FAMILY MEMBER"/>
    <property type="match status" value="1"/>
</dbReference>
<dbReference type="Pfam" id="PF05210">
    <property type="entry name" value="Sprouty"/>
    <property type="match status" value="1"/>
</dbReference>
<dbReference type="Pfam" id="PF00568">
    <property type="entry name" value="WH1"/>
    <property type="match status" value="1"/>
</dbReference>
<dbReference type="SMART" id="SM00461">
    <property type="entry name" value="WH1"/>
    <property type="match status" value="1"/>
</dbReference>
<dbReference type="SUPFAM" id="SSF50729">
    <property type="entry name" value="PH domain-like"/>
    <property type="match status" value="1"/>
</dbReference>
<dbReference type="PROSITE" id="PS51488">
    <property type="entry name" value="KBD"/>
    <property type="match status" value="1"/>
</dbReference>
<dbReference type="PROSITE" id="PS51227">
    <property type="entry name" value="SPR"/>
    <property type="match status" value="1"/>
</dbReference>
<dbReference type="PROSITE" id="PS50229">
    <property type="entry name" value="WH1"/>
    <property type="match status" value="1"/>
</dbReference>
<proteinExistence type="evidence at protein level"/>